<dbReference type="EC" id="1.14.-.-"/>
<dbReference type="EMBL" id="AAFI02000063">
    <property type="protein sequence ID" value="EAL65385.1"/>
    <property type="molecule type" value="Genomic_DNA"/>
</dbReference>
<dbReference type="RefSeq" id="XP_638744.1">
    <property type="nucleotide sequence ID" value="XM_633652.1"/>
</dbReference>
<dbReference type="SMR" id="Q54Q53"/>
<dbReference type="FunCoup" id="Q54Q53">
    <property type="interactions" value="6"/>
</dbReference>
<dbReference type="STRING" id="44689.Q54Q53"/>
<dbReference type="PaxDb" id="44689-DDB0233020"/>
<dbReference type="EnsemblProtists" id="EAL65385">
    <property type="protein sequence ID" value="EAL65385"/>
    <property type="gene ID" value="DDB_G0284089"/>
</dbReference>
<dbReference type="GeneID" id="8624414"/>
<dbReference type="KEGG" id="ddi:DDB_G0284089"/>
<dbReference type="dictyBase" id="DDB_G0284089">
    <property type="gene designation" value="cyp519B1"/>
</dbReference>
<dbReference type="VEuPathDB" id="AmoebaDB:DDB_G0284089"/>
<dbReference type="eggNOG" id="KOG0156">
    <property type="taxonomic scope" value="Eukaryota"/>
</dbReference>
<dbReference type="HOGENOM" id="CLU_001570_4_0_1"/>
<dbReference type="InParanoid" id="Q54Q53"/>
<dbReference type="OMA" id="ISPMYMG"/>
<dbReference type="PhylomeDB" id="Q54Q53"/>
<dbReference type="Reactome" id="R-DDI-211935">
    <property type="pathway name" value="Fatty acids"/>
</dbReference>
<dbReference type="Reactome" id="R-DDI-211945">
    <property type="pathway name" value="Phase I - Functionalization of compounds"/>
</dbReference>
<dbReference type="Reactome" id="R-DDI-211958">
    <property type="pathway name" value="Miscellaneous substrates"/>
</dbReference>
<dbReference type="Reactome" id="R-DDI-211981">
    <property type="pathway name" value="Xenobiotics"/>
</dbReference>
<dbReference type="Reactome" id="R-DDI-211999">
    <property type="pathway name" value="CYP2E1 reactions"/>
</dbReference>
<dbReference type="Reactome" id="R-DDI-2142670">
    <property type="pathway name" value="Synthesis of epoxy (EET) and dihydroxyeicosatrienoic acids (DHET)"/>
</dbReference>
<dbReference type="Reactome" id="R-DDI-2142816">
    <property type="pathway name" value="Synthesis of (16-20)-hydroxyeicosatetraenoic acids (HETE)"/>
</dbReference>
<dbReference type="Reactome" id="R-DDI-5423646">
    <property type="pathway name" value="Aflatoxin activation and detoxification"/>
</dbReference>
<dbReference type="Reactome" id="R-DDI-9027307">
    <property type="pathway name" value="Biosynthesis of maresin-like SPMs"/>
</dbReference>
<dbReference type="Reactome" id="R-DDI-9749641">
    <property type="pathway name" value="Aspirin ADME"/>
</dbReference>
<dbReference type="Reactome" id="R-DDI-9753281">
    <property type="pathway name" value="Paracetamol ADME"/>
</dbReference>
<dbReference type="PRO" id="PR:Q54Q53"/>
<dbReference type="Proteomes" id="UP000002195">
    <property type="component" value="Chromosome 4"/>
</dbReference>
<dbReference type="GO" id="GO:0016020">
    <property type="term" value="C:membrane"/>
    <property type="evidence" value="ECO:0007669"/>
    <property type="project" value="UniProtKB-SubCell"/>
</dbReference>
<dbReference type="GO" id="GO:0020037">
    <property type="term" value="F:heme binding"/>
    <property type="evidence" value="ECO:0007669"/>
    <property type="project" value="InterPro"/>
</dbReference>
<dbReference type="GO" id="GO:0005506">
    <property type="term" value="F:iron ion binding"/>
    <property type="evidence" value="ECO:0007669"/>
    <property type="project" value="InterPro"/>
</dbReference>
<dbReference type="GO" id="GO:0004497">
    <property type="term" value="F:monooxygenase activity"/>
    <property type="evidence" value="ECO:0007669"/>
    <property type="project" value="UniProtKB-KW"/>
</dbReference>
<dbReference type="GO" id="GO:0016705">
    <property type="term" value="F:oxidoreductase activity, acting on paired donors, with incorporation or reduction of molecular oxygen"/>
    <property type="evidence" value="ECO:0007669"/>
    <property type="project" value="InterPro"/>
</dbReference>
<dbReference type="CDD" id="cd20617">
    <property type="entry name" value="CYP1_2-like"/>
    <property type="match status" value="1"/>
</dbReference>
<dbReference type="FunFam" id="1.10.630.10:FF:000068">
    <property type="entry name" value="Probable cytochrome P450 508A2"/>
    <property type="match status" value="1"/>
</dbReference>
<dbReference type="Gene3D" id="1.10.630.10">
    <property type="entry name" value="Cytochrome P450"/>
    <property type="match status" value="1"/>
</dbReference>
<dbReference type="InterPro" id="IPR001128">
    <property type="entry name" value="Cyt_P450"/>
</dbReference>
<dbReference type="InterPro" id="IPR017972">
    <property type="entry name" value="Cyt_P450_CS"/>
</dbReference>
<dbReference type="InterPro" id="IPR002401">
    <property type="entry name" value="Cyt_P450_E_grp-I"/>
</dbReference>
<dbReference type="InterPro" id="IPR036396">
    <property type="entry name" value="Cyt_P450_sf"/>
</dbReference>
<dbReference type="PANTHER" id="PTHR24303:SF31">
    <property type="entry name" value="CYTOCHROME P450 307A1-RELATED"/>
    <property type="match status" value="1"/>
</dbReference>
<dbReference type="PANTHER" id="PTHR24303">
    <property type="entry name" value="HEME-BINDING MONOOXYGENASE FAMILY"/>
    <property type="match status" value="1"/>
</dbReference>
<dbReference type="Pfam" id="PF00067">
    <property type="entry name" value="p450"/>
    <property type="match status" value="1"/>
</dbReference>
<dbReference type="PRINTS" id="PR00463">
    <property type="entry name" value="EP450I"/>
</dbReference>
<dbReference type="PRINTS" id="PR00385">
    <property type="entry name" value="P450"/>
</dbReference>
<dbReference type="SUPFAM" id="SSF48264">
    <property type="entry name" value="Cytochrome P450"/>
    <property type="match status" value="1"/>
</dbReference>
<dbReference type="PROSITE" id="PS00086">
    <property type="entry name" value="CYTOCHROME_P450"/>
    <property type="match status" value="1"/>
</dbReference>
<proteinExistence type="inferred from homology"/>
<evidence type="ECO:0000250" key="1"/>
<evidence type="ECO:0000255" key="2"/>
<evidence type="ECO:0000305" key="3"/>
<reference key="1">
    <citation type="journal article" date="2005" name="Nature">
        <title>The genome of the social amoeba Dictyostelium discoideum.</title>
        <authorList>
            <person name="Eichinger L."/>
            <person name="Pachebat J.A."/>
            <person name="Gloeckner G."/>
            <person name="Rajandream M.A."/>
            <person name="Sucgang R."/>
            <person name="Berriman M."/>
            <person name="Song J."/>
            <person name="Olsen R."/>
            <person name="Szafranski K."/>
            <person name="Xu Q."/>
            <person name="Tunggal B."/>
            <person name="Kummerfeld S."/>
            <person name="Madera M."/>
            <person name="Konfortov B.A."/>
            <person name="Rivero F."/>
            <person name="Bankier A.T."/>
            <person name="Lehmann R."/>
            <person name="Hamlin N."/>
            <person name="Davies R."/>
            <person name="Gaudet P."/>
            <person name="Fey P."/>
            <person name="Pilcher K."/>
            <person name="Chen G."/>
            <person name="Saunders D."/>
            <person name="Sodergren E.J."/>
            <person name="Davis P."/>
            <person name="Kerhornou A."/>
            <person name="Nie X."/>
            <person name="Hall N."/>
            <person name="Anjard C."/>
            <person name="Hemphill L."/>
            <person name="Bason N."/>
            <person name="Farbrother P."/>
            <person name="Desany B."/>
            <person name="Just E."/>
            <person name="Morio T."/>
            <person name="Rost R."/>
            <person name="Churcher C.M."/>
            <person name="Cooper J."/>
            <person name="Haydock S."/>
            <person name="van Driessche N."/>
            <person name="Cronin A."/>
            <person name="Goodhead I."/>
            <person name="Muzny D.M."/>
            <person name="Mourier T."/>
            <person name="Pain A."/>
            <person name="Lu M."/>
            <person name="Harper D."/>
            <person name="Lindsay R."/>
            <person name="Hauser H."/>
            <person name="James K.D."/>
            <person name="Quiles M."/>
            <person name="Madan Babu M."/>
            <person name="Saito T."/>
            <person name="Buchrieser C."/>
            <person name="Wardroper A."/>
            <person name="Felder M."/>
            <person name="Thangavelu M."/>
            <person name="Johnson D."/>
            <person name="Knights A."/>
            <person name="Loulseged H."/>
            <person name="Mungall K.L."/>
            <person name="Oliver K."/>
            <person name="Price C."/>
            <person name="Quail M.A."/>
            <person name="Urushihara H."/>
            <person name="Hernandez J."/>
            <person name="Rabbinowitsch E."/>
            <person name="Steffen D."/>
            <person name="Sanders M."/>
            <person name="Ma J."/>
            <person name="Kohara Y."/>
            <person name="Sharp S."/>
            <person name="Simmonds M.N."/>
            <person name="Spiegler S."/>
            <person name="Tivey A."/>
            <person name="Sugano S."/>
            <person name="White B."/>
            <person name="Walker D."/>
            <person name="Woodward J.R."/>
            <person name="Winckler T."/>
            <person name="Tanaka Y."/>
            <person name="Shaulsky G."/>
            <person name="Schleicher M."/>
            <person name="Weinstock G.M."/>
            <person name="Rosenthal A."/>
            <person name="Cox E.C."/>
            <person name="Chisholm R.L."/>
            <person name="Gibbs R.A."/>
            <person name="Loomis W.F."/>
            <person name="Platzer M."/>
            <person name="Kay R.R."/>
            <person name="Williams J.G."/>
            <person name="Dear P.H."/>
            <person name="Noegel A.A."/>
            <person name="Barrell B.G."/>
            <person name="Kuspa A."/>
        </authorList>
    </citation>
    <scope>NUCLEOTIDE SEQUENCE [LARGE SCALE GENOMIC DNA]</scope>
    <source>
        <strain>AX4</strain>
    </source>
</reference>
<name>C519B_DICDI</name>
<organism>
    <name type="scientific">Dictyostelium discoideum</name>
    <name type="common">Social amoeba</name>
    <dbReference type="NCBI Taxonomy" id="44689"/>
    <lineage>
        <taxon>Eukaryota</taxon>
        <taxon>Amoebozoa</taxon>
        <taxon>Evosea</taxon>
        <taxon>Eumycetozoa</taxon>
        <taxon>Dictyostelia</taxon>
        <taxon>Dictyosteliales</taxon>
        <taxon>Dictyosteliaceae</taxon>
        <taxon>Dictyostelium</taxon>
    </lineage>
</organism>
<comment type="cofactor">
    <cofactor evidence="1">
        <name>heme</name>
        <dbReference type="ChEBI" id="CHEBI:30413"/>
    </cofactor>
</comment>
<comment type="subcellular location">
    <subcellularLocation>
        <location evidence="3">Membrane</location>
        <topology evidence="3">Single-pass membrane protein</topology>
    </subcellularLocation>
</comment>
<comment type="similarity">
    <text evidence="3">Belongs to the cytochrome P450 family.</text>
</comment>
<sequence>MNLINLILYFILFWIVFDFIRKNRRISFNDPPSPWALPIIGHLHKLSLNPHRSLTELAKVYGGVYSLHIGDSKTVVITDVSAFKDVTIKQFKNFANRPQPKSIRVITNFKGLAFADYDQWQKTRKLVSSALTKTKIKTFNNLIEKQTENLIESMNEFSNKNELFHPRKYLTKYSLNIILSMLFSKEIGKNESINKGTMERLTIPFNEAFKKVGKVDDFLWFLSPFFYFSNKQYKKYIFDIYYFMEEIYDQHLLDLDYNEPKDLLDQLIIASQGREKETVILVGMDFLLAGSDTQKATQEWFCLYLINNPDVQKKAYQELISVVGKDCKFVTSNHIENCPYFISIIKEVFRIRSPGPLGLPRISIDDTYLSNGMFIPKGTQILLNIFGMGNLLVSEPDQFKPERWINYKNQQQQKQQQQQQQVNNKNSIDSSESSNLEFFDDLEKVSNPFSLGPRNCVGMAIAKSSIYSVCSNILLNFELSSINNQIIDDNEVFGVSINPKEFSIKLTKR</sequence>
<keyword id="KW-0349">Heme</keyword>
<keyword id="KW-0408">Iron</keyword>
<keyword id="KW-0472">Membrane</keyword>
<keyword id="KW-0479">Metal-binding</keyword>
<keyword id="KW-0503">Monooxygenase</keyword>
<keyword id="KW-0560">Oxidoreductase</keyword>
<keyword id="KW-1185">Reference proteome</keyword>
<keyword id="KW-0812">Transmembrane</keyword>
<keyword id="KW-1133">Transmembrane helix</keyword>
<protein>
    <recommendedName>
        <fullName>Probable cytochrome P450 519B1</fullName>
        <ecNumber>1.14.-.-</ecNumber>
    </recommendedName>
</protein>
<gene>
    <name type="primary">cyp519B1</name>
    <name type="ORF">DDB_G0284089</name>
</gene>
<accession>Q54Q53</accession>
<feature type="chain" id="PRO_0000318833" description="Probable cytochrome P450 519B1">
    <location>
        <begin position="1"/>
        <end position="509"/>
    </location>
</feature>
<feature type="transmembrane region" description="Helical" evidence="2">
    <location>
        <begin position="1"/>
        <end position="21"/>
    </location>
</feature>
<feature type="binding site" description="axial binding residue" evidence="1">
    <location>
        <position position="456"/>
    </location>
    <ligand>
        <name>heme</name>
        <dbReference type="ChEBI" id="CHEBI:30413"/>
    </ligand>
    <ligandPart>
        <name>Fe</name>
        <dbReference type="ChEBI" id="CHEBI:18248"/>
    </ligandPart>
</feature>